<protein>
    <recommendedName>
        <fullName evidence="5">Geissoschizine synthase</fullName>
        <shortName evidence="5">AsGS</shortName>
        <ecNumber evidence="4">1.3.1.36</ecNumber>
    </recommendedName>
    <alternativeName>
        <fullName evidence="6">Alcohol dehydrogenase GS</fullName>
    </alternativeName>
</protein>
<evidence type="ECO:0000250" key="1">
    <source>
        <dbReference type="UniProtKB" id="P06525"/>
    </source>
</evidence>
<evidence type="ECO:0000250" key="2">
    <source>
        <dbReference type="UniProtKB" id="W8JWW7"/>
    </source>
</evidence>
<evidence type="ECO:0000255" key="3"/>
<evidence type="ECO:0000269" key="4">
    <source>
    </source>
</evidence>
<evidence type="ECO:0000303" key="5">
    <source>
    </source>
</evidence>
<evidence type="ECO:0000305" key="6"/>
<evidence type="ECO:0000312" key="7">
    <source>
        <dbReference type="EMBL" id="URS65381.1"/>
    </source>
</evidence>
<reference evidence="7" key="1">
    <citation type="journal article" date="2022" name="Chem. Sci.">
        <title>Deciphering and reprogramming the cyclization regioselectivity in bifurcation of indole alkaloid biosynthesis.</title>
        <authorList>
            <person name="Wang Z."/>
            <person name="Xiao Y."/>
            <person name="Wu S."/>
            <person name="Chen J."/>
            <person name="Li A."/>
            <person name="Tatsis E.C."/>
        </authorList>
    </citation>
    <scope>NUCLEOTIDE SEQUENCE [MRNA]</scope>
    <scope>FUNCTION</scope>
    <scope>CATALYTIC ACTIVITY</scope>
    <scope>PATHWAY</scope>
</reference>
<gene>
    <name evidence="5" type="primary">GS</name>
</gene>
<feature type="chain" id="PRO_0000462270" description="Geissoschizine synthase">
    <location>
        <begin position="1"/>
        <end position="364"/>
    </location>
</feature>
<feature type="domain" description="Enoyl reductase (ER)" evidence="3">
    <location>
        <begin position="24"/>
        <end position="343"/>
    </location>
</feature>
<feature type="binding site" evidence="2">
    <location>
        <position position="51"/>
    </location>
    <ligand>
        <name>Zn(2+)</name>
        <dbReference type="ChEBI" id="CHEBI:29105"/>
        <label>1</label>
        <note>catalytic</note>
    </ligand>
</feature>
<feature type="binding site" evidence="2">
    <location>
        <position position="52"/>
    </location>
    <ligand>
        <name>NADP(+)</name>
        <dbReference type="ChEBI" id="CHEBI:58349"/>
    </ligand>
</feature>
<feature type="binding site" evidence="2">
    <location>
        <position position="73"/>
    </location>
    <ligand>
        <name>Zn(2+)</name>
        <dbReference type="ChEBI" id="CHEBI:29105"/>
        <label>1</label>
        <note>catalytic</note>
    </ligand>
</feature>
<feature type="binding site" evidence="2">
    <location>
        <position position="74"/>
    </location>
    <ligand>
        <name>Zn(2+)</name>
        <dbReference type="ChEBI" id="CHEBI:29105"/>
        <label>1</label>
        <note>catalytic</note>
    </ligand>
</feature>
<feature type="binding site" evidence="2">
    <location>
        <position position="104"/>
    </location>
    <ligand>
        <name>Zn(2+)</name>
        <dbReference type="ChEBI" id="CHEBI:29105"/>
        <label>2</label>
    </ligand>
</feature>
<feature type="binding site" evidence="2">
    <location>
        <position position="107"/>
    </location>
    <ligand>
        <name>Zn(2+)</name>
        <dbReference type="ChEBI" id="CHEBI:29105"/>
        <label>2</label>
    </ligand>
</feature>
<feature type="binding site" evidence="2">
    <location>
        <position position="110"/>
    </location>
    <ligand>
        <name>Zn(2+)</name>
        <dbReference type="ChEBI" id="CHEBI:29105"/>
        <label>2</label>
    </ligand>
</feature>
<feature type="binding site" evidence="2">
    <location>
        <position position="118"/>
    </location>
    <ligand>
        <name>Zn(2+)</name>
        <dbReference type="ChEBI" id="CHEBI:29105"/>
        <label>2</label>
    </ligand>
</feature>
<feature type="binding site" evidence="2">
    <location>
        <position position="168"/>
    </location>
    <ligand>
        <name>Zn(2+)</name>
        <dbReference type="ChEBI" id="CHEBI:29105"/>
        <label>1</label>
        <note>catalytic</note>
    </ligand>
</feature>
<feature type="binding site" evidence="2">
    <location>
        <position position="194"/>
    </location>
    <ligand>
        <name>NADP(+)</name>
        <dbReference type="ChEBI" id="CHEBI:58349"/>
    </ligand>
</feature>
<feature type="binding site" evidence="2">
    <location>
        <position position="196"/>
    </location>
    <ligand>
        <name>NADP(+)</name>
        <dbReference type="ChEBI" id="CHEBI:58349"/>
    </ligand>
</feature>
<feature type="binding site" evidence="2">
    <location>
        <position position="197"/>
    </location>
    <ligand>
        <name>NADP(+)</name>
        <dbReference type="ChEBI" id="CHEBI:58349"/>
    </ligand>
</feature>
<feature type="binding site" evidence="2">
    <location>
        <position position="216"/>
    </location>
    <ligand>
        <name>NADP(+)</name>
        <dbReference type="ChEBI" id="CHEBI:58349"/>
    </ligand>
</feature>
<feature type="binding site" evidence="2">
    <location>
        <position position="217"/>
    </location>
    <ligand>
        <name>NADP(+)</name>
        <dbReference type="ChEBI" id="CHEBI:58349"/>
    </ligand>
</feature>
<feature type="binding site" evidence="2">
    <location>
        <position position="218"/>
    </location>
    <ligand>
        <name>NADP(+)</name>
        <dbReference type="ChEBI" id="CHEBI:58349"/>
    </ligand>
</feature>
<feature type="binding site" evidence="2">
    <location>
        <position position="221"/>
    </location>
    <ligand>
        <name>NADP(+)</name>
        <dbReference type="ChEBI" id="CHEBI:58349"/>
    </ligand>
</feature>
<feature type="binding site" evidence="2">
    <location>
        <position position="261"/>
    </location>
    <ligand>
        <name>NADP(+)</name>
        <dbReference type="ChEBI" id="CHEBI:58349"/>
    </ligand>
</feature>
<feature type="binding site" evidence="2">
    <location>
        <position position="280"/>
    </location>
    <ligand>
        <name>NADP(+)</name>
        <dbReference type="ChEBI" id="CHEBI:58349"/>
    </ligand>
</feature>
<feature type="binding site" evidence="2">
    <location>
        <position position="282"/>
    </location>
    <ligand>
        <name>NADP(+)</name>
        <dbReference type="ChEBI" id="CHEBI:58349"/>
    </ligand>
</feature>
<feature type="binding site" evidence="2">
    <location>
        <position position="304"/>
    </location>
    <ligand>
        <name>NADP(+)</name>
        <dbReference type="ChEBI" id="CHEBI:58349"/>
    </ligand>
</feature>
<feature type="binding site" evidence="2">
    <location>
        <position position="306"/>
    </location>
    <ligand>
        <name>NADP(+)</name>
        <dbReference type="ChEBI" id="CHEBI:58349"/>
    </ligand>
</feature>
<feature type="binding site" evidence="2">
    <location>
        <position position="351"/>
    </location>
    <ligand>
        <name>NADP(+)</name>
        <dbReference type="ChEBI" id="CHEBI:58349"/>
    </ligand>
</feature>
<dbReference type="EC" id="1.3.1.36" evidence="4"/>
<dbReference type="EMBL" id="OM323326">
    <property type="protein sequence ID" value="URS65381.1"/>
    <property type="molecule type" value="mRNA"/>
</dbReference>
<dbReference type="GO" id="GO:0008106">
    <property type="term" value="F:alcohol dehydrogenase (NADP+) activity"/>
    <property type="evidence" value="ECO:0000314"/>
    <property type="project" value="UniProtKB"/>
</dbReference>
<dbReference type="GO" id="GO:0008270">
    <property type="term" value="F:zinc ion binding"/>
    <property type="evidence" value="ECO:0007669"/>
    <property type="project" value="InterPro"/>
</dbReference>
<dbReference type="GO" id="GO:0035835">
    <property type="term" value="P:indole alkaloid biosynthetic process"/>
    <property type="evidence" value="ECO:0000314"/>
    <property type="project" value="UniProtKB"/>
</dbReference>
<dbReference type="CDD" id="cd05283">
    <property type="entry name" value="CAD1"/>
    <property type="match status" value="1"/>
</dbReference>
<dbReference type="FunFam" id="3.40.50.720:FF:000022">
    <property type="entry name" value="Cinnamyl alcohol dehydrogenase"/>
    <property type="match status" value="1"/>
</dbReference>
<dbReference type="Gene3D" id="3.90.180.10">
    <property type="entry name" value="Medium-chain alcohol dehydrogenases, catalytic domain"/>
    <property type="match status" value="1"/>
</dbReference>
<dbReference type="Gene3D" id="3.40.50.720">
    <property type="entry name" value="NAD(P)-binding Rossmann-like Domain"/>
    <property type="match status" value="1"/>
</dbReference>
<dbReference type="InterPro" id="IPR013149">
    <property type="entry name" value="ADH-like_C"/>
</dbReference>
<dbReference type="InterPro" id="IPR013154">
    <property type="entry name" value="ADH-like_N"/>
</dbReference>
<dbReference type="InterPro" id="IPR002328">
    <property type="entry name" value="ADH_Zn_CS"/>
</dbReference>
<dbReference type="InterPro" id="IPR047109">
    <property type="entry name" value="CAD-like"/>
</dbReference>
<dbReference type="InterPro" id="IPR011032">
    <property type="entry name" value="GroES-like_sf"/>
</dbReference>
<dbReference type="InterPro" id="IPR036291">
    <property type="entry name" value="NAD(P)-bd_dom_sf"/>
</dbReference>
<dbReference type="InterPro" id="IPR020843">
    <property type="entry name" value="PKS_ER"/>
</dbReference>
<dbReference type="PANTHER" id="PTHR42683">
    <property type="entry name" value="ALDEHYDE REDUCTASE"/>
    <property type="match status" value="1"/>
</dbReference>
<dbReference type="Pfam" id="PF08240">
    <property type="entry name" value="ADH_N"/>
    <property type="match status" value="1"/>
</dbReference>
<dbReference type="Pfam" id="PF00107">
    <property type="entry name" value="ADH_zinc_N"/>
    <property type="match status" value="1"/>
</dbReference>
<dbReference type="SMART" id="SM00829">
    <property type="entry name" value="PKS_ER"/>
    <property type="match status" value="1"/>
</dbReference>
<dbReference type="SUPFAM" id="SSF50129">
    <property type="entry name" value="GroES-like"/>
    <property type="match status" value="1"/>
</dbReference>
<dbReference type="SUPFAM" id="SSF51735">
    <property type="entry name" value="NAD(P)-binding Rossmann-fold domains"/>
    <property type="match status" value="1"/>
</dbReference>
<dbReference type="PROSITE" id="PS00059">
    <property type="entry name" value="ADH_ZINC"/>
    <property type="match status" value="1"/>
</dbReference>
<accession>A0A9E7LUR3</accession>
<sequence>MAGESTQVDLSVKAIGWGAKDASGILHPIKFSRRTPGERDVKIRVLYCGVCNFDMEMVRNKWGFTRYPYVFGHETAGEVVEVGSKVQKFKVGDKVAVGCMVGSCGKCYNCENGMENYCPEPNMADGSVYREQGERSYGGCSNVMVVDEKFVLRWPENLPQDTGVPLLCAGVVVYSPMKYMGLDKPGKHIGVFGLGGLGSVAVKFIKAFGGKATVISTSRRKEKEAIEEHGADAFVVNSDTEQLQALAGTMDGVVDTTPGGRTPMSLMLNLLKFDGSLILVGAPETLFELPVQPLILGRRKIIGSSTGGLKEYQEMLDFAAKHNILCDTEVIGIDYLSTAMERIKNLDVKYRFAIDIGNTLKYEE</sequence>
<comment type="function">
    <text evidence="4">An alcohol dehydrogenase involved in the biosynthesis of seco-iridoid and derivatives monoterpenoid indole alkaloids natural products (PubMed:36349266). Catalyzes the production of geissoschizine and its conversion to (16R)-E-isositsirikine and (16R)-Z-isositsirikine (PubMed:36349266).</text>
</comment>
<comment type="catalytic activity">
    <reaction evidence="4">
        <text>(19E)-geissoschizine + NADP(+) = 4,21-dehydrogeissoschizine + NADPH</text>
        <dbReference type="Rhea" id="RHEA:11376"/>
        <dbReference type="ChEBI" id="CHEBI:17037"/>
        <dbReference type="ChEBI" id="CHEBI:17294"/>
        <dbReference type="ChEBI" id="CHEBI:57783"/>
        <dbReference type="ChEBI" id="CHEBI:58349"/>
        <dbReference type="EC" id="1.3.1.36"/>
    </reaction>
    <physiologicalReaction direction="right-to-left" evidence="4">
        <dbReference type="Rhea" id="RHEA:11378"/>
    </physiologicalReaction>
</comment>
<comment type="catalytic activity">
    <reaction evidence="4">
        <text>(19E)-geissoschizine + NADPH + H(+) = (16R,19E)-isositsirikine + NADP(+)</text>
        <dbReference type="Rhea" id="RHEA:83839"/>
        <dbReference type="ChEBI" id="CHEBI:15378"/>
        <dbReference type="ChEBI" id="CHEBI:17037"/>
        <dbReference type="ChEBI" id="CHEBI:57783"/>
        <dbReference type="ChEBI" id="CHEBI:58349"/>
        <dbReference type="ChEBI" id="CHEBI:70508"/>
    </reaction>
    <physiologicalReaction direction="left-to-right" evidence="4">
        <dbReference type="Rhea" id="RHEA:83840"/>
    </physiologicalReaction>
</comment>
<comment type="catalytic activity">
    <reaction evidence="4">
        <text>(19E)-geissoschizine + NADPH + H(+) = (16R,19Z)-isositsirikine + NADP(+)</text>
        <dbReference type="Rhea" id="RHEA:83843"/>
        <dbReference type="ChEBI" id="CHEBI:15378"/>
        <dbReference type="ChEBI" id="CHEBI:17037"/>
        <dbReference type="ChEBI" id="CHEBI:57783"/>
        <dbReference type="ChEBI" id="CHEBI:58349"/>
        <dbReference type="ChEBI" id="CHEBI:233403"/>
    </reaction>
    <physiologicalReaction direction="left-to-right" evidence="4">
        <dbReference type="Rhea" id="RHEA:83844"/>
    </physiologicalReaction>
</comment>
<comment type="cofactor">
    <cofactor evidence="1">
        <name>Zn(2+)</name>
        <dbReference type="ChEBI" id="CHEBI:29105"/>
    </cofactor>
    <text evidence="1">Binds 2 Zn(2+) ions per subunit.</text>
</comment>
<comment type="pathway">
    <text evidence="4">Alkaloid biosynthesis.</text>
</comment>
<comment type="subunit">
    <text evidence="1">Homodimer.</text>
</comment>
<comment type="similarity">
    <text evidence="6">Belongs to the zinc-containing alcohol dehydrogenase family. Class-III subfamily.</text>
</comment>
<organism>
    <name type="scientific">Alstonia scholaris</name>
    <name type="common">Dogbane</name>
    <name type="synonym">Echites scholaris</name>
    <dbReference type="NCBI Taxonomy" id="52822"/>
    <lineage>
        <taxon>Eukaryota</taxon>
        <taxon>Viridiplantae</taxon>
        <taxon>Streptophyta</taxon>
        <taxon>Embryophyta</taxon>
        <taxon>Tracheophyta</taxon>
        <taxon>Spermatophyta</taxon>
        <taxon>Magnoliopsida</taxon>
        <taxon>eudicotyledons</taxon>
        <taxon>Gunneridae</taxon>
        <taxon>Pentapetalae</taxon>
        <taxon>asterids</taxon>
        <taxon>lamiids</taxon>
        <taxon>Gentianales</taxon>
        <taxon>Apocynaceae</taxon>
        <taxon>Rauvolfioideae</taxon>
        <taxon>Alstonieae</taxon>
        <taxon>Alstonia</taxon>
    </lineage>
</organism>
<keyword id="KW-0017">Alkaloid metabolism</keyword>
<keyword id="KW-0479">Metal-binding</keyword>
<keyword id="KW-0521">NADP</keyword>
<keyword id="KW-0560">Oxidoreductase</keyword>
<keyword id="KW-0862">Zinc</keyword>
<name>GS_ALSSC</name>
<proteinExistence type="evidence at protein level"/>